<dbReference type="EMBL" id="CP000872">
    <property type="protein sequence ID" value="ABX62309.1"/>
    <property type="molecule type" value="Genomic_DNA"/>
</dbReference>
<dbReference type="RefSeq" id="WP_002964365.1">
    <property type="nucleotide sequence ID" value="NC_010103.1"/>
</dbReference>
<dbReference type="SMR" id="A9M5Q4"/>
<dbReference type="GeneID" id="97533521"/>
<dbReference type="KEGG" id="bcs:BCAN_A1260"/>
<dbReference type="HOGENOM" id="CLU_072226_1_1_5"/>
<dbReference type="PhylomeDB" id="A9M5Q4"/>
<dbReference type="Proteomes" id="UP000001385">
    <property type="component" value="Chromosome I"/>
</dbReference>
<dbReference type="GO" id="GO:0015935">
    <property type="term" value="C:small ribosomal subunit"/>
    <property type="evidence" value="ECO:0007669"/>
    <property type="project" value="InterPro"/>
</dbReference>
<dbReference type="GO" id="GO:0019843">
    <property type="term" value="F:rRNA binding"/>
    <property type="evidence" value="ECO:0007669"/>
    <property type="project" value="UniProtKB-UniRule"/>
</dbReference>
<dbReference type="GO" id="GO:0003735">
    <property type="term" value="F:structural constituent of ribosome"/>
    <property type="evidence" value="ECO:0007669"/>
    <property type="project" value="InterPro"/>
</dbReference>
<dbReference type="GO" id="GO:0000049">
    <property type="term" value="F:tRNA binding"/>
    <property type="evidence" value="ECO:0007669"/>
    <property type="project" value="UniProtKB-UniRule"/>
</dbReference>
<dbReference type="GO" id="GO:0006412">
    <property type="term" value="P:translation"/>
    <property type="evidence" value="ECO:0007669"/>
    <property type="project" value="UniProtKB-UniRule"/>
</dbReference>
<dbReference type="CDD" id="cd14869">
    <property type="entry name" value="uS7_Bacteria"/>
    <property type="match status" value="1"/>
</dbReference>
<dbReference type="FunFam" id="1.10.455.10:FF:000001">
    <property type="entry name" value="30S ribosomal protein S7"/>
    <property type="match status" value="1"/>
</dbReference>
<dbReference type="Gene3D" id="1.10.455.10">
    <property type="entry name" value="Ribosomal protein S7 domain"/>
    <property type="match status" value="1"/>
</dbReference>
<dbReference type="HAMAP" id="MF_00480_B">
    <property type="entry name" value="Ribosomal_uS7_B"/>
    <property type="match status" value="1"/>
</dbReference>
<dbReference type="InterPro" id="IPR000235">
    <property type="entry name" value="Ribosomal_uS7"/>
</dbReference>
<dbReference type="InterPro" id="IPR005717">
    <property type="entry name" value="Ribosomal_uS7_bac/org-type"/>
</dbReference>
<dbReference type="InterPro" id="IPR020606">
    <property type="entry name" value="Ribosomal_uS7_CS"/>
</dbReference>
<dbReference type="InterPro" id="IPR023798">
    <property type="entry name" value="Ribosomal_uS7_dom"/>
</dbReference>
<dbReference type="InterPro" id="IPR036823">
    <property type="entry name" value="Ribosomal_uS7_dom_sf"/>
</dbReference>
<dbReference type="NCBIfam" id="TIGR01029">
    <property type="entry name" value="rpsG_bact"/>
    <property type="match status" value="1"/>
</dbReference>
<dbReference type="PANTHER" id="PTHR11205">
    <property type="entry name" value="RIBOSOMAL PROTEIN S7"/>
    <property type="match status" value="1"/>
</dbReference>
<dbReference type="Pfam" id="PF00177">
    <property type="entry name" value="Ribosomal_S7"/>
    <property type="match status" value="1"/>
</dbReference>
<dbReference type="PIRSF" id="PIRSF002122">
    <property type="entry name" value="RPS7p_RPS7a_RPS5e_RPS7o"/>
    <property type="match status" value="1"/>
</dbReference>
<dbReference type="SUPFAM" id="SSF47973">
    <property type="entry name" value="Ribosomal protein S7"/>
    <property type="match status" value="1"/>
</dbReference>
<dbReference type="PROSITE" id="PS00052">
    <property type="entry name" value="RIBOSOMAL_S7"/>
    <property type="match status" value="1"/>
</dbReference>
<accession>A9M5Q4</accession>
<protein>
    <recommendedName>
        <fullName evidence="1">Small ribosomal subunit protein uS7</fullName>
    </recommendedName>
    <alternativeName>
        <fullName evidence="2">30S ribosomal protein S7</fullName>
    </alternativeName>
</protein>
<reference key="1">
    <citation type="submission" date="2007-10" db="EMBL/GenBank/DDBJ databases">
        <title>Brucella canis ATCC 23365 whole genome shotgun sequencing project.</title>
        <authorList>
            <person name="Setubal J.C."/>
            <person name="Bowns C."/>
            <person name="Boyle S."/>
            <person name="Crasta O.R."/>
            <person name="Czar M.J."/>
            <person name="Dharmanolla C."/>
            <person name="Gillespie J.J."/>
            <person name="Kenyon R.W."/>
            <person name="Lu J."/>
            <person name="Mane S."/>
            <person name="Mohapatra S."/>
            <person name="Nagrani S."/>
            <person name="Purkayastha A."/>
            <person name="Rajasimha H.K."/>
            <person name="Shallom J.M."/>
            <person name="Shallom S."/>
            <person name="Shukla M."/>
            <person name="Snyder E.E."/>
            <person name="Sobral B.W."/>
            <person name="Wattam A.R."/>
            <person name="Will R."/>
            <person name="Williams K."/>
            <person name="Yoo H."/>
            <person name="Bruce D."/>
            <person name="Detter C."/>
            <person name="Munk C."/>
            <person name="Brettin T.S."/>
        </authorList>
    </citation>
    <scope>NUCLEOTIDE SEQUENCE [LARGE SCALE GENOMIC DNA]</scope>
    <source>
        <strain>ATCC 23365 / NCTC 10854 / RM-666</strain>
    </source>
</reference>
<keyword id="KW-1185">Reference proteome</keyword>
<keyword id="KW-0687">Ribonucleoprotein</keyword>
<keyword id="KW-0689">Ribosomal protein</keyword>
<keyword id="KW-0694">RNA-binding</keyword>
<keyword id="KW-0699">rRNA-binding</keyword>
<keyword id="KW-0820">tRNA-binding</keyword>
<gene>
    <name evidence="1" type="primary">rpsG</name>
    <name type="ordered locus">BCAN_A1260</name>
</gene>
<sequence>MSRRHKAEKREINPDPKFGDLVITKFMNAVMLHGKKSVAESIVYGALDAIEAKAKSEPVALFHQALDNVAPHIEVRSRRVGGATYQVPVDVRPERRQALAIRWLINAARGRNETTMVDRLSGELLDAANNRGSAVKKREDTHRMAEANRAFSHYRW</sequence>
<name>RS7_BRUC2</name>
<feature type="chain" id="PRO_1000081271" description="Small ribosomal subunit protein uS7">
    <location>
        <begin position="1"/>
        <end position="156"/>
    </location>
</feature>
<comment type="function">
    <text evidence="1">One of the primary rRNA binding proteins, it binds directly to 16S rRNA where it nucleates assembly of the head domain of the 30S subunit. Is located at the subunit interface close to the decoding center, probably blocks exit of the E-site tRNA.</text>
</comment>
<comment type="subunit">
    <text evidence="1">Part of the 30S ribosomal subunit. Contacts proteins S9 and S11.</text>
</comment>
<comment type="similarity">
    <text evidence="1">Belongs to the universal ribosomal protein uS7 family.</text>
</comment>
<proteinExistence type="inferred from homology"/>
<evidence type="ECO:0000255" key="1">
    <source>
        <dbReference type="HAMAP-Rule" id="MF_00480"/>
    </source>
</evidence>
<evidence type="ECO:0000305" key="2"/>
<organism>
    <name type="scientific">Brucella canis (strain ATCC 23365 / NCTC 10854 / RM-666)</name>
    <dbReference type="NCBI Taxonomy" id="483179"/>
    <lineage>
        <taxon>Bacteria</taxon>
        <taxon>Pseudomonadati</taxon>
        <taxon>Pseudomonadota</taxon>
        <taxon>Alphaproteobacteria</taxon>
        <taxon>Hyphomicrobiales</taxon>
        <taxon>Brucellaceae</taxon>
        <taxon>Brucella/Ochrobactrum group</taxon>
        <taxon>Brucella</taxon>
    </lineage>
</organism>